<accession>Q8IV76</accession>
<accession>Q3MNE0</accession>
<accession>Q69HD7</accession>
<accession>Q8N7X9</accession>
<dbReference type="EMBL" id="AY270020">
    <property type="protein sequence ID" value="AAQ01136.1"/>
    <property type="molecule type" value="mRNA"/>
</dbReference>
<dbReference type="EMBL" id="AK097552">
    <property type="protein sequence ID" value="BAC05097.1"/>
    <property type="molecule type" value="mRNA"/>
</dbReference>
<dbReference type="EMBL" id="BC040301">
    <property type="protein sequence ID" value="AAH40301.1"/>
    <property type="molecule type" value="mRNA"/>
</dbReference>
<dbReference type="EMBL" id="AY623425">
    <property type="protein sequence ID" value="AAT49049.1"/>
    <property type="molecule type" value="mRNA"/>
</dbReference>
<dbReference type="CCDS" id="CCDS35431.1">
    <molecule id="Q8IV76-1"/>
</dbReference>
<dbReference type="RefSeq" id="NP_775764.2">
    <molecule id="Q8IV76-1"/>
    <property type="nucleotide sequence ID" value="NM_173493.3"/>
</dbReference>
<dbReference type="SMR" id="Q8IV76"/>
<dbReference type="BioGRID" id="126545">
    <property type="interactions" value="3"/>
</dbReference>
<dbReference type="FunCoup" id="Q8IV76">
    <property type="interactions" value="37"/>
</dbReference>
<dbReference type="STRING" id="9606.ENSP00000359382"/>
<dbReference type="iPTMnet" id="Q8IV76"/>
<dbReference type="PhosphoSitePlus" id="Q8IV76"/>
<dbReference type="BioMuta" id="PASD1"/>
<dbReference type="DMDM" id="74728046"/>
<dbReference type="jPOST" id="Q8IV76"/>
<dbReference type="MassIVE" id="Q8IV76"/>
<dbReference type="PaxDb" id="9606-ENSP00000359382"/>
<dbReference type="PeptideAtlas" id="Q8IV76"/>
<dbReference type="ProteomicsDB" id="70670">
    <molecule id="Q8IV76-1"/>
</dbReference>
<dbReference type="ProteomicsDB" id="70671">
    <molecule id="Q8IV76-2"/>
</dbReference>
<dbReference type="Antibodypedia" id="17024">
    <property type="antibodies" value="275 antibodies from 20 providers"/>
</dbReference>
<dbReference type="DNASU" id="139135"/>
<dbReference type="Ensembl" id="ENST00000370357.5">
    <molecule id="Q8IV76-1"/>
    <property type="protein sequence ID" value="ENSP00000359382.4"/>
    <property type="gene ID" value="ENSG00000166049.11"/>
</dbReference>
<dbReference type="GeneID" id="139135"/>
<dbReference type="KEGG" id="hsa:139135"/>
<dbReference type="MANE-Select" id="ENST00000370357.5">
    <property type="protein sequence ID" value="ENSP00000359382.4"/>
    <property type="RefSeq nucleotide sequence ID" value="NM_173493.3"/>
    <property type="RefSeq protein sequence ID" value="NP_775764.2"/>
</dbReference>
<dbReference type="UCSC" id="uc004fev.5">
    <molecule id="Q8IV76-1"/>
    <property type="organism name" value="human"/>
</dbReference>
<dbReference type="AGR" id="HGNC:20686"/>
<dbReference type="CTD" id="139135"/>
<dbReference type="DisGeNET" id="139135"/>
<dbReference type="GeneCards" id="PASD1"/>
<dbReference type="HGNC" id="HGNC:20686">
    <property type="gene designation" value="PASD1"/>
</dbReference>
<dbReference type="HPA" id="ENSG00000166049">
    <property type="expression patterns" value="Tissue enriched (testis)"/>
</dbReference>
<dbReference type="MIM" id="300993">
    <property type="type" value="gene"/>
</dbReference>
<dbReference type="neXtProt" id="NX_Q8IV76"/>
<dbReference type="OpenTargets" id="ENSG00000166049"/>
<dbReference type="PharmGKB" id="PA134909788"/>
<dbReference type="VEuPathDB" id="HostDB:ENSG00000166049"/>
<dbReference type="eggNOG" id="ENOG502SDT0">
    <property type="taxonomic scope" value="Eukaryota"/>
</dbReference>
<dbReference type="GeneTree" id="ENSGT00530000064765"/>
<dbReference type="HOGENOM" id="CLU_441185_0_0_1"/>
<dbReference type="InParanoid" id="Q8IV76"/>
<dbReference type="OMA" id="DYIQLWQ"/>
<dbReference type="OrthoDB" id="411251at2759"/>
<dbReference type="PAN-GO" id="Q8IV76">
    <property type="GO annotations" value="5 GO annotations based on evolutionary models"/>
</dbReference>
<dbReference type="PhylomeDB" id="Q8IV76"/>
<dbReference type="TreeFam" id="TF324568"/>
<dbReference type="PathwayCommons" id="Q8IV76"/>
<dbReference type="BioGRID-ORCS" id="139135">
    <property type="hits" value="8 hits in 773 CRISPR screens"/>
</dbReference>
<dbReference type="ChiTaRS" id="PASD1">
    <property type="organism name" value="human"/>
</dbReference>
<dbReference type="GeneWiki" id="PASD1"/>
<dbReference type="GenomeRNAi" id="139135"/>
<dbReference type="Pharos" id="Q8IV76">
    <property type="development level" value="Tbio"/>
</dbReference>
<dbReference type="PRO" id="PR:Q8IV76"/>
<dbReference type="Proteomes" id="UP000005640">
    <property type="component" value="Chromosome X"/>
</dbReference>
<dbReference type="RNAct" id="Q8IV76">
    <property type="molecule type" value="protein"/>
</dbReference>
<dbReference type="Bgee" id="ENSG00000166049">
    <property type="expression patterns" value="Expressed in male germ line stem cell (sensu Vertebrata) in testis and 15 other cell types or tissues"/>
</dbReference>
<dbReference type="GO" id="GO:1990513">
    <property type="term" value="C:CLOCK-BMAL transcription complex"/>
    <property type="evidence" value="ECO:0000318"/>
    <property type="project" value="GO_Central"/>
</dbReference>
<dbReference type="GO" id="GO:1990512">
    <property type="term" value="C:Cry-Per complex"/>
    <property type="evidence" value="ECO:0000314"/>
    <property type="project" value="UniProtKB"/>
</dbReference>
<dbReference type="GO" id="GO:0016607">
    <property type="term" value="C:nuclear speck"/>
    <property type="evidence" value="ECO:0000314"/>
    <property type="project" value="HPA"/>
</dbReference>
<dbReference type="GO" id="GO:0005634">
    <property type="term" value="C:nucleus"/>
    <property type="evidence" value="ECO:0000314"/>
    <property type="project" value="UniProtKB"/>
</dbReference>
<dbReference type="GO" id="GO:0140297">
    <property type="term" value="F:DNA-binding transcription factor binding"/>
    <property type="evidence" value="ECO:0000353"/>
    <property type="project" value="GO_Central"/>
</dbReference>
<dbReference type="GO" id="GO:0140416">
    <property type="term" value="F:transcription regulator inhibitor activity"/>
    <property type="evidence" value="ECO:0000314"/>
    <property type="project" value="GO_Central"/>
</dbReference>
<dbReference type="GO" id="GO:0032922">
    <property type="term" value="P:circadian regulation of gene expression"/>
    <property type="evidence" value="ECO:0000318"/>
    <property type="project" value="GO_Central"/>
</dbReference>
<dbReference type="GO" id="GO:0042754">
    <property type="term" value="P:negative regulation of circadian rhythm"/>
    <property type="evidence" value="ECO:0000314"/>
    <property type="project" value="UniProtKB"/>
</dbReference>
<dbReference type="GO" id="GO:0045892">
    <property type="term" value="P:negative regulation of DNA-templated transcription"/>
    <property type="evidence" value="ECO:0000314"/>
    <property type="project" value="UniProtKB"/>
</dbReference>
<dbReference type="GO" id="GO:0006357">
    <property type="term" value="P:regulation of transcription by RNA polymerase II"/>
    <property type="evidence" value="ECO:0000318"/>
    <property type="project" value="GO_Central"/>
</dbReference>
<dbReference type="CDD" id="cd00130">
    <property type="entry name" value="PAS"/>
    <property type="match status" value="1"/>
</dbReference>
<dbReference type="Gene3D" id="3.30.450.20">
    <property type="entry name" value="PAS domain"/>
    <property type="match status" value="1"/>
</dbReference>
<dbReference type="InterPro" id="IPR047230">
    <property type="entry name" value="CLOCK-like"/>
</dbReference>
<dbReference type="InterPro" id="IPR000014">
    <property type="entry name" value="PAS"/>
</dbReference>
<dbReference type="InterPro" id="IPR035965">
    <property type="entry name" value="PAS-like_dom_sf"/>
</dbReference>
<dbReference type="PANTHER" id="PTHR46055:SF4">
    <property type="entry name" value="CIRCADIAN CLOCK PROTEIN PASD1"/>
    <property type="match status" value="1"/>
</dbReference>
<dbReference type="PANTHER" id="PTHR46055">
    <property type="entry name" value="CIRCADIAN LOCOMOTER OUTPUT CYCLES PROTEIN KAPUT"/>
    <property type="match status" value="1"/>
</dbReference>
<dbReference type="SMART" id="SM00091">
    <property type="entry name" value="PAS"/>
    <property type="match status" value="1"/>
</dbReference>
<dbReference type="SUPFAM" id="SSF55785">
    <property type="entry name" value="PYP-like sensor domain (PAS domain)"/>
    <property type="match status" value="1"/>
</dbReference>
<dbReference type="PROSITE" id="PS50112">
    <property type="entry name" value="PAS"/>
    <property type="match status" value="1"/>
</dbReference>
<evidence type="ECO:0000255" key="1"/>
<evidence type="ECO:0000255" key="2">
    <source>
        <dbReference type="PROSITE-ProRule" id="PRU00140"/>
    </source>
</evidence>
<evidence type="ECO:0000256" key="3">
    <source>
        <dbReference type="SAM" id="MobiDB-lite"/>
    </source>
</evidence>
<evidence type="ECO:0000269" key="4">
    <source>
    </source>
</evidence>
<evidence type="ECO:0000269" key="5">
    <source>
    </source>
</evidence>
<evidence type="ECO:0000303" key="6">
    <source>
    </source>
</evidence>
<evidence type="ECO:0000303" key="7">
    <source>
    </source>
</evidence>
<evidence type="ECO:0000305" key="8"/>
<evidence type="ECO:0000312" key="9">
    <source>
        <dbReference type="HGNC" id="HGNC:20686"/>
    </source>
</evidence>
<reference key="1">
    <citation type="journal article" date="2004" name="Br. J. Cancer">
        <title>A novel diffuse large B-cell lymphoma-associated cancer testis antigen encoding a PAS domain protein.</title>
        <authorList>
            <person name="Liggins A.P."/>
            <person name="Brown P.J."/>
            <person name="Asker K."/>
            <person name="Pulford K."/>
            <person name="Banham A.H."/>
        </authorList>
    </citation>
    <scope>NUCLEOTIDE SEQUENCE [MRNA] (ISOFORMS 1 AND 2)</scope>
    <scope>TISSUE SPECIFICITY</scope>
</reference>
<reference key="2">
    <citation type="journal article" date="2004" name="Nat. Genet.">
        <title>Complete sequencing and characterization of 21,243 full-length human cDNAs.</title>
        <authorList>
            <person name="Ota T."/>
            <person name="Suzuki Y."/>
            <person name="Nishikawa T."/>
            <person name="Otsuki T."/>
            <person name="Sugiyama T."/>
            <person name="Irie R."/>
            <person name="Wakamatsu A."/>
            <person name="Hayashi K."/>
            <person name="Sato H."/>
            <person name="Nagai K."/>
            <person name="Kimura K."/>
            <person name="Makita H."/>
            <person name="Sekine M."/>
            <person name="Obayashi M."/>
            <person name="Nishi T."/>
            <person name="Shibahara T."/>
            <person name="Tanaka T."/>
            <person name="Ishii S."/>
            <person name="Yamamoto J."/>
            <person name="Saito K."/>
            <person name="Kawai Y."/>
            <person name="Isono Y."/>
            <person name="Nakamura Y."/>
            <person name="Nagahari K."/>
            <person name="Murakami K."/>
            <person name="Yasuda T."/>
            <person name="Iwayanagi T."/>
            <person name="Wagatsuma M."/>
            <person name="Shiratori A."/>
            <person name="Sudo H."/>
            <person name="Hosoiri T."/>
            <person name="Kaku Y."/>
            <person name="Kodaira H."/>
            <person name="Kondo H."/>
            <person name="Sugawara M."/>
            <person name="Takahashi M."/>
            <person name="Kanda K."/>
            <person name="Yokoi T."/>
            <person name="Furuya T."/>
            <person name="Kikkawa E."/>
            <person name="Omura Y."/>
            <person name="Abe K."/>
            <person name="Kamihara K."/>
            <person name="Katsuta N."/>
            <person name="Sato K."/>
            <person name="Tanikawa M."/>
            <person name="Yamazaki M."/>
            <person name="Ninomiya K."/>
            <person name="Ishibashi T."/>
            <person name="Yamashita H."/>
            <person name="Murakawa K."/>
            <person name="Fujimori K."/>
            <person name="Tanai H."/>
            <person name="Kimata M."/>
            <person name="Watanabe M."/>
            <person name="Hiraoka S."/>
            <person name="Chiba Y."/>
            <person name="Ishida S."/>
            <person name="Ono Y."/>
            <person name="Takiguchi S."/>
            <person name="Watanabe S."/>
            <person name="Yosida M."/>
            <person name="Hotuta T."/>
            <person name="Kusano J."/>
            <person name="Kanehori K."/>
            <person name="Takahashi-Fujii A."/>
            <person name="Hara H."/>
            <person name="Tanase T.-O."/>
            <person name="Nomura Y."/>
            <person name="Togiya S."/>
            <person name="Komai F."/>
            <person name="Hara R."/>
            <person name="Takeuchi K."/>
            <person name="Arita M."/>
            <person name="Imose N."/>
            <person name="Musashino K."/>
            <person name="Yuuki H."/>
            <person name="Oshima A."/>
            <person name="Sasaki N."/>
            <person name="Aotsuka S."/>
            <person name="Yoshikawa Y."/>
            <person name="Matsunawa H."/>
            <person name="Ichihara T."/>
            <person name="Shiohata N."/>
            <person name="Sano S."/>
            <person name="Moriya S."/>
            <person name="Momiyama H."/>
            <person name="Satoh N."/>
            <person name="Takami S."/>
            <person name="Terashima Y."/>
            <person name="Suzuki O."/>
            <person name="Nakagawa S."/>
            <person name="Senoh A."/>
            <person name="Mizoguchi H."/>
            <person name="Goto Y."/>
            <person name="Shimizu F."/>
            <person name="Wakebe H."/>
            <person name="Hishigaki H."/>
            <person name="Watanabe T."/>
            <person name="Sugiyama A."/>
            <person name="Takemoto M."/>
            <person name="Kawakami B."/>
            <person name="Yamazaki M."/>
            <person name="Watanabe K."/>
            <person name="Kumagai A."/>
            <person name="Itakura S."/>
            <person name="Fukuzumi Y."/>
            <person name="Fujimori Y."/>
            <person name="Komiyama M."/>
            <person name="Tashiro H."/>
            <person name="Tanigami A."/>
            <person name="Fujiwara T."/>
            <person name="Ono T."/>
            <person name="Yamada K."/>
            <person name="Fujii Y."/>
            <person name="Ozaki K."/>
            <person name="Hirao M."/>
            <person name="Ohmori Y."/>
            <person name="Kawabata A."/>
            <person name="Hikiji T."/>
            <person name="Kobatake N."/>
            <person name="Inagaki H."/>
            <person name="Ikema Y."/>
            <person name="Okamoto S."/>
            <person name="Okitani R."/>
            <person name="Kawakami T."/>
            <person name="Noguchi S."/>
            <person name="Itoh T."/>
            <person name="Shigeta K."/>
            <person name="Senba T."/>
            <person name="Matsumura K."/>
            <person name="Nakajima Y."/>
            <person name="Mizuno T."/>
            <person name="Morinaga M."/>
            <person name="Sasaki M."/>
            <person name="Togashi T."/>
            <person name="Oyama M."/>
            <person name="Hata H."/>
            <person name="Watanabe M."/>
            <person name="Komatsu T."/>
            <person name="Mizushima-Sugano J."/>
            <person name="Satoh T."/>
            <person name="Shirai Y."/>
            <person name="Takahashi Y."/>
            <person name="Nakagawa K."/>
            <person name="Okumura K."/>
            <person name="Nagase T."/>
            <person name="Nomura N."/>
            <person name="Kikuchi H."/>
            <person name="Masuho Y."/>
            <person name="Yamashita R."/>
            <person name="Nakai K."/>
            <person name="Yada T."/>
            <person name="Nakamura Y."/>
            <person name="Ohara O."/>
            <person name="Isogai T."/>
            <person name="Sugano S."/>
        </authorList>
    </citation>
    <scope>NUCLEOTIDE SEQUENCE [LARGE SCALE MRNA] (ISOFORM 1)</scope>
    <source>
        <tissue>Testis</tissue>
    </source>
</reference>
<reference key="3">
    <citation type="journal article" date="2004" name="Genome Res.">
        <title>The status, quality, and expansion of the NIH full-length cDNA project: the Mammalian Gene Collection (MGC).</title>
        <authorList>
            <consortium name="The MGC Project Team"/>
        </authorList>
    </citation>
    <scope>NUCLEOTIDE SEQUENCE [LARGE SCALE MRNA] (ISOFORM 1)</scope>
    <source>
        <tissue>Testis</tissue>
    </source>
</reference>
<reference key="4">
    <citation type="journal article" date="2005" name="Biochem. Biophys. Res. Commun.">
        <title>Humoral detection of leukaemia-associated antigens in presentation acute myeloid leukaemia.</title>
        <authorList>
            <person name="Guinn B.-A."/>
            <person name="Bland E.A."/>
            <person name="Lodi U."/>
            <person name="Liggins A.P."/>
            <person name="Tobal K."/>
            <person name="Petters S."/>
            <person name="Wells J.W."/>
            <person name="Banham A.H."/>
            <person name="Mufti G.J."/>
        </authorList>
    </citation>
    <scope>NUCLEOTIDE SEQUENCE [MRNA] OF 469-773 (ISOFORM 1)</scope>
</reference>
<reference key="5">
    <citation type="journal article" date="2015" name="Mol. Cell">
        <title>Cancer/testis antigen PASD1 silences the circadian clock.</title>
        <authorList>
            <person name="Michael A.K."/>
            <person name="Harvey S.L."/>
            <person name="Sammons P.J."/>
            <person name="Anderson A.P."/>
            <person name="Kopalle H.M."/>
            <person name="Banham A.H."/>
            <person name="Partch C.L."/>
        </authorList>
    </citation>
    <scope>FUNCTION</scope>
    <scope>INTERACTION WITH CLOCK-BMAL1</scope>
    <scope>SUBCELLULAR LOCATION</scope>
    <scope>DOMAIN</scope>
    <scope>TISSUE SPECIFICITY</scope>
    <scope>MUTAGENESIS OF VAL-36 AND MET-45</scope>
</reference>
<organism>
    <name type="scientific">Homo sapiens</name>
    <name type="common">Human</name>
    <dbReference type="NCBI Taxonomy" id="9606"/>
    <lineage>
        <taxon>Eukaryota</taxon>
        <taxon>Metazoa</taxon>
        <taxon>Chordata</taxon>
        <taxon>Craniata</taxon>
        <taxon>Vertebrata</taxon>
        <taxon>Euteleostomi</taxon>
        <taxon>Mammalia</taxon>
        <taxon>Eutheria</taxon>
        <taxon>Euarchontoglires</taxon>
        <taxon>Primates</taxon>
        <taxon>Haplorrhini</taxon>
        <taxon>Catarrhini</taxon>
        <taxon>Hominidae</taxon>
        <taxon>Homo</taxon>
    </lineage>
</organism>
<name>PASD1_HUMAN</name>
<gene>
    <name evidence="9" type="primary">PASD1</name>
</gene>
<comment type="function">
    <text evidence="5">Functions as a suppressor of the biological clock that drives the daily circadian rhythms of cells throughout the body (PubMed:25936801). Acts as a nuclear repressor of the CLOCK-BMAL1 heterodimer-mediated transcriptional activation of the core clock components (PubMed:25936801). Inhibits circadian clock function in cancer cells, when overexpressed (PubMed:25936801).</text>
</comment>
<comment type="subunit">
    <text evidence="5">Interacts with the CLOCK-BMAL1 heterodimer; this interaction inhibits CLOCK-BMAL1 transcriptional activation and suppress circadian timekeeping (PubMed:25936801). Interacts with BMAL1 (PubMed:25936801).</text>
</comment>
<comment type="subcellular location">
    <molecule>Isoform 1</molecule>
    <subcellularLocation>
        <location evidence="5">Nucleus</location>
    </subcellularLocation>
    <text evidence="5">Associates preferentially at the periphery of the nucleus with heterochromatin (PubMed:25936801).</text>
</comment>
<comment type="subcellular location">
    <molecule>Isoform 2</molecule>
    <subcellularLocation>
        <location evidence="5">Nucleus</location>
    </subcellularLocation>
    <text evidence="5">Associates preferentially at the periphery of the nucleus with heterochromatin (PubMed:25936801).</text>
</comment>
<comment type="alternative products">
    <event type="alternative splicing"/>
    <isoform>
        <id>Q8IV76-1</id>
        <name>1</name>
        <name>PASD1_v2</name>
        <sequence type="displayed"/>
    </isoform>
    <isoform>
        <id>Q8IV76-2</id>
        <name>2</name>
        <name>PASD1_v1</name>
        <sequence type="described" ref="VSP_027663 VSP_027664"/>
    </isoform>
</comment>
<comment type="tissue specificity">
    <text evidence="4 5">Testis-specific (PubMed:25936801). Expressed in a broad range of cancer cells, including melanoma, lung cancer, and breast cancer (at protein level). Testis-specific (PubMed:15162151). Found in histologically normal tissues from patients with uterus, lung and small intestine cancers. Widespread expression seen in solid tumors and diffuse large B-cell lymphoma (DLBCL)-derived cell lines. Isoform 2 is expressed in all DLBCL-derived cell lines, while isoform 1 is preferentially expressed in cell lines derived from non-germinal center DLBCL (PubMed:15162151).</text>
</comment>
<comment type="domain">
    <text evidence="5">C-termini of isoform 1 and isoform 2 are sufficient to interact with and to repress the activity of CLOCK-BMAL1 (PubMed:25936801).</text>
</comment>
<comment type="miscellaneous">
    <molecule>Isoform 2</molecule>
    <text evidence="8">Due to intron retention.</text>
</comment>
<feature type="chain" id="PRO_0000299445" description="Circadian clock protein PASD1">
    <location>
        <begin position="1"/>
        <end position="773"/>
    </location>
</feature>
<feature type="domain" description="PAS" evidence="2">
    <location>
        <begin position="30"/>
        <end position="102"/>
    </location>
</feature>
<feature type="region of interest" description="Disordered" evidence="3">
    <location>
        <begin position="313"/>
        <end position="361"/>
    </location>
</feature>
<feature type="region of interest" description="Necessary for transcriptional repression" evidence="5">
    <location>
        <begin position="365"/>
        <end position="412"/>
    </location>
</feature>
<feature type="region of interest" description="Disordered" evidence="3">
    <location>
        <begin position="427"/>
        <end position="448"/>
    </location>
</feature>
<feature type="region of interest" description="Disordered" evidence="3">
    <location>
        <begin position="506"/>
        <end position="569"/>
    </location>
</feature>
<feature type="region of interest" description="Disordered" evidence="3">
    <location>
        <begin position="732"/>
        <end position="773"/>
    </location>
</feature>
<feature type="coiled-coil region" evidence="1">
    <location>
        <begin position="365"/>
        <end position="412"/>
    </location>
</feature>
<feature type="coiled-coil region" evidence="1">
    <location>
        <begin position="475"/>
        <end position="553"/>
    </location>
</feature>
<feature type="compositionally biased region" description="Basic and acidic residues" evidence="3">
    <location>
        <begin position="506"/>
        <end position="536"/>
    </location>
</feature>
<feature type="splice variant" id="VSP_027663" description="In isoform 2." evidence="6">
    <original>S</original>
    <variation>R</variation>
    <location>
        <position position="639"/>
    </location>
</feature>
<feature type="splice variant" id="VSP_027664" description="In isoform 2." evidence="6">
    <location>
        <begin position="640"/>
        <end position="773"/>
    </location>
</feature>
<feature type="sequence variant" id="VAR_034819" description="In dbSNP:rs5924658.">
    <original>Q</original>
    <variation>E</variation>
    <location>
        <position position="213"/>
    </location>
</feature>
<feature type="mutagenesis site" description="Reduces inhibition of CLOCK-BMAL1 heterodimer activity; when associated with R-45." evidence="5">
    <original>V</original>
    <variation>E</variation>
    <location>
        <position position="36"/>
    </location>
</feature>
<feature type="mutagenesis site" description="Reduces inhibition of CLOCK-BMAL1 heterodimer activity; when associated with E-36." evidence="5">
    <original>M</original>
    <variation>R</variation>
    <location>
        <position position="45"/>
    </location>
</feature>
<feature type="sequence conflict" description="In Ref. 2; BAC05097." evidence="8" ref="2">
    <original>E</original>
    <variation>K</variation>
    <location>
        <position position="107"/>
    </location>
</feature>
<protein>
    <recommendedName>
        <fullName evidence="8">Circadian clock protein PASD1</fullName>
    </recommendedName>
    <alternativeName>
        <fullName evidence="7">Cancer/testis antigen 63</fullName>
        <shortName evidence="7">CT63</shortName>
    </alternativeName>
    <alternativeName>
        <fullName evidence="6">OX-TES-1</fullName>
    </alternativeName>
    <alternativeName>
        <fullName evidence="6 9">PAS domain-containing protein 1</fullName>
    </alternativeName>
</protein>
<sequence length="773" mass="87428">MKMRGEKRRDKVNPKSSQRKLNWIPSFPTYDYFNQVTLQLLDGFMITLSTDGVIICVAENISSLLGHLPAEIVGKKLLSLLPDEEKDEVYQKIILKFPLLNSETHIEFCCHLKRGNVEHGDSSAYENVKFIVNVRDICNEFPVVFSGLFSSHLCADFAACVPQEDRLYLVGNVCILRTQLLQQLYTSKAVSDEAVLTQDSDEEPFVGELSSSQGQRGHTSMKAVYVEPAAAAAAAAISDDQIDIAEVEQYGPQENVHMFVDSDSTYCSSTVFLDTMPESPALSLQDFRGEPEVNPLYRADPVDLEFSVDQVDSVDQEGPMDQQDPENPVAPLDQAGLMDPVDPEDSVDLGAAGASAQPLQPSSPVAYDIISQELELMKKLKEQLEERTWLLHDAIQNQQNALELMMDHLQKQPNTLRHVVIPDLQSSEAVPKKQQKQHAGQVKRPLPHPKDVKCFCGLSLSNSLKNTGELQEPCVAFNQQQLVQQEQHLKEQQRQLREQLQQLREQRKVQKQKKMQEKKKLQEQKMQEKKKLQEQRRQKKKKLQERKKWQGQMLQKEPEEEQQKQQLQEQPLKHNVIVGNERVQICLQNPRDVSVPLCNHPVRFLQAQPIVPVQRAAEQQPSGFYQDENCGQQEDESQSFYPEAYQGPPVNQLPLIDTSNSEAISSSSIPQFPITSDSTISTLETPQDYIRLWQELSDSLGPVVQVNTWSCDEQGTLHGQPTYHQVQVSEVGVEGPPDPQAFQGPAAYQPDQMRSAEQTRLMPAEQRDSNKPC</sequence>
<proteinExistence type="evidence at protein level"/>
<keyword id="KW-0025">Alternative splicing</keyword>
<keyword id="KW-0090">Biological rhythms</keyword>
<keyword id="KW-0175">Coiled coil</keyword>
<keyword id="KW-0539">Nucleus</keyword>
<keyword id="KW-1267">Proteomics identification</keyword>
<keyword id="KW-1185">Reference proteome</keyword>